<feature type="chain" id="PRO_0000190869" description="Probable endonuclease 4">
    <location>
        <begin position="1"/>
        <end position="296"/>
    </location>
</feature>
<feature type="binding site" evidence="1">
    <location>
        <position position="68"/>
    </location>
    <ligand>
        <name>Zn(2+)</name>
        <dbReference type="ChEBI" id="CHEBI:29105"/>
        <label>1</label>
    </ligand>
</feature>
<feature type="binding site" evidence="1">
    <location>
        <position position="109"/>
    </location>
    <ligand>
        <name>Zn(2+)</name>
        <dbReference type="ChEBI" id="CHEBI:29105"/>
        <label>1</label>
    </ligand>
</feature>
<feature type="binding site" evidence="1">
    <location>
        <position position="144"/>
    </location>
    <ligand>
        <name>Zn(2+)</name>
        <dbReference type="ChEBI" id="CHEBI:29105"/>
        <label>1</label>
    </ligand>
</feature>
<feature type="binding site" evidence="1">
    <location>
        <position position="144"/>
    </location>
    <ligand>
        <name>Zn(2+)</name>
        <dbReference type="ChEBI" id="CHEBI:29105"/>
        <label>2</label>
    </ligand>
</feature>
<feature type="binding site" evidence="1">
    <location>
        <position position="178"/>
    </location>
    <ligand>
        <name>Zn(2+)</name>
        <dbReference type="ChEBI" id="CHEBI:29105"/>
        <label>2</label>
    </ligand>
</feature>
<feature type="binding site" evidence="1">
    <location>
        <position position="181"/>
    </location>
    <ligand>
        <name>Zn(2+)</name>
        <dbReference type="ChEBI" id="CHEBI:29105"/>
        <label>3</label>
    </ligand>
</feature>
<feature type="binding site" evidence="1">
    <location>
        <position position="213"/>
    </location>
    <ligand>
        <name>Zn(2+)</name>
        <dbReference type="ChEBI" id="CHEBI:29105"/>
        <label>2</label>
    </ligand>
</feature>
<feature type="binding site" evidence="1">
    <location>
        <position position="226"/>
    </location>
    <ligand>
        <name>Zn(2+)</name>
        <dbReference type="ChEBI" id="CHEBI:29105"/>
        <label>3</label>
    </ligand>
</feature>
<feature type="binding site" evidence="1">
    <location>
        <position position="228"/>
    </location>
    <ligand>
        <name>Zn(2+)</name>
        <dbReference type="ChEBI" id="CHEBI:29105"/>
        <label>3</label>
    </ligand>
</feature>
<feature type="binding site" evidence="1">
    <location>
        <position position="258"/>
    </location>
    <ligand>
        <name>Zn(2+)</name>
        <dbReference type="ChEBI" id="CHEBI:29105"/>
        <label>2</label>
    </ligand>
</feature>
<evidence type="ECO:0000255" key="1">
    <source>
        <dbReference type="HAMAP-Rule" id="MF_00152"/>
    </source>
</evidence>
<sequence>MLLGSHVSMSGKKMLEGSAIEAHEYGETTFMIYTGAPQNTRRKSIEDLNITKGHEVMEKYGLSNIVVHAPYIINIANTTKPETFNLGVDFLQQEIERTQAIGAKDIVLHPGAHVGAGVDAGINKIIEGLNEVLTNDNNVRIALETMAGKGTEIGRSFEELARIIDGVHNNERLSVCFDTCHTHDAGYNVKEDFDGVLNEFDKIIGVDRIKVVHVNDSKNDRGAQKDRHENIGFGYIGFDALNYIVHHDSFKDIPKILETPYVGEDKKNKKPPYKLEIEMLKQQQFDPELKNKVMQQ</sequence>
<keyword id="KW-0227">DNA damage</keyword>
<keyword id="KW-0234">DNA repair</keyword>
<keyword id="KW-0255">Endonuclease</keyword>
<keyword id="KW-0378">Hydrolase</keyword>
<keyword id="KW-0479">Metal-binding</keyword>
<keyword id="KW-0540">Nuclease</keyword>
<keyword id="KW-0862">Zinc</keyword>
<comment type="function">
    <text evidence="1">Endonuclease IV plays a role in DNA repair. It cleaves phosphodiester bonds at apurinic or apyrimidinic (AP) sites, generating a 3'-hydroxyl group and a 5'-terminal sugar phosphate.</text>
</comment>
<comment type="catalytic activity">
    <reaction evidence="1">
        <text>Endonucleolytic cleavage to 5'-phosphooligonucleotide end-products.</text>
        <dbReference type="EC" id="3.1.21.2"/>
    </reaction>
</comment>
<comment type="cofactor">
    <cofactor evidence="1">
        <name>Zn(2+)</name>
        <dbReference type="ChEBI" id="CHEBI:29105"/>
    </cofactor>
    <text evidence="1">Binds 3 Zn(2+) ions.</text>
</comment>
<comment type="similarity">
    <text evidence="1">Belongs to the AP endonuclease 2 family.</text>
</comment>
<dbReference type="EC" id="3.1.21.2" evidence="1"/>
<dbReference type="EMBL" id="CP000046">
    <property type="protein sequence ID" value="AAW38230.1"/>
    <property type="molecule type" value="Genomic_DNA"/>
</dbReference>
<dbReference type="RefSeq" id="WP_000924214.1">
    <property type="nucleotide sequence ID" value="NZ_JBGOFO010000003.1"/>
</dbReference>
<dbReference type="SMR" id="Q5HFK3"/>
<dbReference type="KEGG" id="sac:SACOL1614"/>
<dbReference type="HOGENOM" id="CLU_025885_4_1_9"/>
<dbReference type="Proteomes" id="UP000000530">
    <property type="component" value="Chromosome"/>
</dbReference>
<dbReference type="GO" id="GO:0008833">
    <property type="term" value="F:deoxyribonuclease IV (phage-T4-induced) activity"/>
    <property type="evidence" value="ECO:0007669"/>
    <property type="project" value="UniProtKB-UniRule"/>
</dbReference>
<dbReference type="GO" id="GO:0003677">
    <property type="term" value="F:DNA binding"/>
    <property type="evidence" value="ECO:0007669"/>
    <property type="project" value="InterPro"/>
</dbReference>
<dbReference type="GO" id="GO:0003906">
    <property type="term" value="F:DNA-(apurinic or apyrimidinic site) endonuclease activity"/>
    <property type="evidence" value="ECO:0007669"/>
    <property type="project" value="TreeGrafter"/>
</dbReference>
<dbReference type="GO" id="GO:0008081">
    <property type="term" value="F:phosphoric diester hydrolase activity"/>
    <property type="evidence" value="ECO:0007669"/>
    <property type="project" value="TreeGrafter"/>
</dbReference>
<dbReference type="GO" id="GO:0008270">
    <property type="term" value="F:zinc ion binding"/>
    <property type="evidence" value="ECO:0007669"/>
    <property type="project" value="UniProtKB-UniRule"/>
</dbReference>
<dbReference type="GO" id="GO:0006284">
    <property type="term" value="P:base-excision repair"/>
    <property type="evidence" value="ECO:0007669"/>
    <property type="project" value="TreeGrafter"/>
</dbReference>
<dbReference type="CDD" id="cd00019">
    <property type="entry name" value="AP2Ec"/>
    <property type="match status" value="1"/>
</dbReference>
<dbReference type="FunFam" id="3.20.20.150:FF:000001">
    <property type="entry name" value="Probable endonuclease 4"/>
    <property type="match status" value="1"/>
</dbReference>
<dbReference type="Gene3D" id="3.20.20.150">
    <property type="entry name" value="Divalent-metal-dependent TIM barrel enzymes"/>
    <property type="match status" value="1"/>
</dbReference>
<dbReference type="HAMAP" id="MF_00152">
    <property type="entry name" value="Nfo"/>
    <property type="match status" value="1"/>
</dbReference>
<dbReference type="InterPro" id="IPR001719">
    <property type="entry name" value="AP_endonuc_2"/>
</dbReference>
<dbReference type="InterPro" id="IPR018246">
    <property type="entry name" value="AP_endonuc_F2_Zn_BS"/>
</dbReference>
<dbReference type="InterPro" id="IPR036237">
    <property type="entry name" value="Xyl_isomerase-like_sf"/>
</dbReference>
<dbReference type="InterPro" id="IPR013022">
    <property type="entry name" value="Xyl_isomerase-like_TIM-brl"/>
</dbReference>
<dbReference type="NCBIfam" id="TIGR00587">
    <property type="entry name" value="nfo"/>
    <property type="match status" value="1"/>
</dbReference>
<dbReference type="NCBIfam" id="NF002196">
    <property type="entry name" value="PRK01060.1-1"/>
    <property type="match status" value="1"/>
</dbReference>
<dbReference type="PANTHER" id="PTHR21445:SF0">
    <property type="entry name" value="APURINIC-APYRIMIDINIC ENDONUCLEASE"/>
    <property type="match status" value="1"/>
</dbReference>
<dbReference type="PANTHER" id="PTHR21445">
    <property type="entry name" value="ENDONUCLEASE IV ENDODEOXYRIBONUCLEASE IV"/>
    <property type="match status" value="1"/>
</dbReference>
<dbReference type="Pfam" id="PF01261">
    <property type="entry name" value="AP_endonuc_2"/>
    <property type="match status" value="1"/>
</dbReference>
<dbReference type="SMART" id="SM00518">
    <property type="entry name" value="AP2Ec"/>
    <property type="match status" value="1"/>
</dbReference>
<dbReference type="SUPFAM" id="SSF51658">
    <property type="entry name" value="Xylose isomerase-like"/>
    <property type="match status" value="1"/>
</dbReference>
<dbReference type="PROSITE" id="PS00729">
    <property type="entry name" value="AP_NUCLEASE_F2_1"/>
    <property type="match status" value="1"/>
</dbReference>
<dbReference type="PROSITE" id="PS00730">
    <property type="entry name" value="AP_NUCLEASE_F2_2"/>
    <property type="match status" value="1"/>
</dbReference>
<dbReference type="PROSITE" id="PS00731">
    <property type="entry name" value="AP_NUCLEASE_F2_3"/>
    <property type="match status" value="1"/>
</dbReference>
<dbReference type="PROSITE" id="PS51432">
    <property type="entry name" value="AP_NUCLEASE_F2_4"/>
    <property type="match status" value="1"/>
</dbReference>
<protein>
    <recommendedName>
        <fullName evidence="1">Probable endonuclease 4</fullName>
        <ecNumber evidence="1">3.1.21.2</ecNumber>
    </recommendedName>
    <alternativeName>
        <fullName evidence="1">Endodeoxyribonuclease IV</fullName>
    </alternativeName>
    <alternativeName>
        <fullName evidence="1">Endonuclease IV</fullName>
    </alternativeName>
</protein>
<proteinExistence type="inferred from homology"/>
<gene>
    <name evidence="1" type="primary">nfo</name>
    <name type="ordered locus">SACOL1614</name>
</gene>
<organism>
    <name type="scientific">Staphylococcus aureus (strain COL)</name>
    <dbReference type="NCBI Taxonomy" id="93062"/>
    <lineage>
        <taxon>Bacteria</taxon>
        <taxon>Bacillati</taxon>
        <taxon>Bacillota</taxon>
        <taxon>Bacilli</taxon>
        <taxon>Bacillales</taxon>
        <taxon>Staphylococcaceae</taxon>
        <taxon>Staphylococcus</taxon>
    </lineage>
</organism>
<name>END4_STAAC</name>
<reference key="1">
    <citation type="journal article" date="2005" name="J. Bacteriol.">
        <title>Insights on evolution of virulence and resistance from the complete genome analysis of an early methicillin-resistant Staphylococcus aureus strain and a biofilm-producing methicillin-resistant Staphylococcus epidermidis strain.</title>
        <authorList>
            <person name="Gill S.R."/>
            <person name="Fouts D.E."/>
            <person name="Archer G.L."/>
            <person name="Mongodin E.F."/>
            <person name="DeBoy R.T."/>
            <person name="Ravel J."/>
            <person name="Paulsen I.T."/>
            <person name="Kolonay J.F."/>
            <person name="Brinkac L.M."/>
            <person name="Beanan M.J."/>
            <person name="Dodson R.J."/>
            <person name="Daugherty S.C."/>
            <person name="Madupu R."/>
            <person name="Angiuoli S.V."/>
            <person name="Durkin A.S."/>
            <person name="Haft D.H."/>
            <person name="Vamathevan J.J."/>
            <person name="Khouri H."/>
            <person name="Utterback T.R."/>
            <person name="Lee C."/>
            <person name="Dimitrov G."/>
            <person name="Jiang L."/>
            <person name="Qin H."/>
            <person name="Weidman J."/>
            <person name="Tran K."/>
            <person name="Kang K.H."/>
            <person name="Hance I.R."/>
            <person name="Nelson K.E."/>
            <person name="Fraser C.M."/>
        </authorList>
    </citation>
    <scope>NUCLEOTIDE SEQUENCE [LARGE SCALE GENOMIC DNA]</scope>
    <source>
        <strain>COL</strain>
    </source>
</reference>
<accession>Q5HFK3</accession>